<sequence>MASDSSFPGASSNVAEYSVSEISGALKRTVEDTFGHVRVRGEISGYRGPHSSGHAYFALKDDRARLEAVIWRGSMSRLRFRPEEGMEVIATGKLTTYPGSSKYQIVIEQMEPAGAGALMALLEERKQRLAAEGLFDPTLKQLLPFMPRVIGVVTSPTGAVIRDIIHRISDRYPLRVIVWPVRVQGDTCGPEVATAVNGFNTLPDDGPIPRPDVLIVARGGGSLEDLWGFNDEIVVRAVAASHIPVISAVGHETDWTLIDLAADMRAPTPTGAAEMAVPVKADLQASLASQSARLSSAMSRFFDQKRQAHRAAARAMPSADQLLALPRRRFDEAASRLTRALFVNTQKKRVHFDGHARQLSPRLLQRRLVELERGVTMLGQRLPRALEAFLRERRTAFTHRANRLSPEPILRRTRLTGSTLEQLDRRRDQAVRLLIERVKRRSQELDRLMRTLSYESVLERGFAVVFDAQGKPVKQAAAVSPGDALSVRFRDGDVGVVARAGLTIPDPTKGQ</sequence>
<name>EX7L_BRUAB</name>
<gene>
    <name evidence="1" type="primary">xseA</name>
    <name type="ordered locus">BruAb2_0468</name>
</gene>
<organism>
    <name type="scientific">Brucella abortus biovar 1 (strain 9-941)</name>
    <dbReference type="NCBI Taxonomy" id="262698"/>
    <lineage>
        <taxon>Bacteria</taxon>
        <taxon>Pseudomonadati</taxon>
        <taxon>Pseudomonadota</taxon>
        <taxon>Alphaproteobacteria</taxon>
        <taxon>Hyphomicrobiales</taxon>
        <taxon>Brucellaceae</taxon>
        <taxon>Brucella/Ochrobactrum group</taxon>
        <taxon>Brucella</taxon>
    </lineage>
</organism>
<protein>
    <recommendedName>
        <fullName evidence="1">Exodeoxyribonuclease 7 large subunit</fullName>
        <ecNumber evidence="1">3.1.11.6</ecNumber>
    </recommendedName>
    <alternativeName>
        <fullName evidence="1">Exodeoxyribonuclease VII large subunit</fullName>
        <shortName evidence="1">Exonuclease VII large subunit</shortName>
    </alternativeName>
</protein>
<comment type="function">
    <text evidence="1">Bidirectionally degrades single-stranded DNA into large acid-insoluble oligonucleotides, which are then degraded further into small acid-soluble oligonucleotides.</text>
</comment>
<comment type="catalytic activity">
    <reaction evidence="1">
        <text>Exonucleolytic cleavage in either 5'- to 3'- or 3'- to 5'-direction to yield nucleoside 5'-phosphates.</text>
        <dbReference type="EC" id="3.1.11.6"/>
    </reaction>
</comment>
<comment type="subunit">
    <text evidence="1">Heterooligomer composed of large and small subunits.</text>
</comment>
<comment type="subcellular location">
    <subcellularLocation>
        <location evidence="1">Cytoplasm</location>
    </subcellularLocation>
</comment>
<comment type="similarity">
    <text evidence="1">Belongs to the XseA family.</text>
</comment>
<dbReference type="EC" id="3.1.11.6" evidence="1"/>
<dbReference type="EMBL" id="AE017224">
    <property type="protein sequence ID" value="AAX75890.1"/>
    <property type="molecule type" value="Genomic_DNA"/>
</dbReference>
<dbReference type="SMR" id="Q578P4"/>
<dbReference type="EnsemblBacteria" id="AAX75890">
    <property type="protein sequence ID" value="AAX75890"/>
    <property type="gene ID" value="BruAb2_0468"/>
</dbReference>
<dbReference type="KEGG" id="bmb:BruAb2_0468"/>
<dbReference type="HOGENOM" id="CLU_023625_3_1_5"/>
<dbReference type="PRO" id="PR:Q578P4"/>
<dbReference type="Proteomes" id="UP000000540">
    <property type="component" value="Chromosome II"/>
</dbReference>
<dbReference type="GO" id="GO:0005737">
    <property type="term" value="C:cytoplasm"/>
    <property type="evidence" value="ECO:0007669"/>
    <property type="project" value="UniProtKB-SubCell"/>
</dbReference>
<dbReference type="GO" id="GO:0009318">
    <property type="term" value="C:exodeoxyribonuclease VII complex"/>
    <property type="evidence" value="ECO:0007669"/>
    <property type="project" value="InterPro"/>
</dbReference>
<dbReference type="GO" id="GO:0008855">
    <property type="term" value="F:exodeoxyribonuclease VII activity"/>
    <property type="evidence" value="ECO:0007669"/>
    <property type="project" value="UniProtKB-UniRule"/>
</dbReference>
<dbReference type="GO" id="GO:0003676">
    <property type="term" value="F:nucleic acid binding"/>
    <property type="evidence" value="ECO:0007669"/>
    <property type="project" value="InterPro"/>
</dbReference>
<dbReference type="GO" id="GO:0006308">
    <property type="term" value="P:DNA catabolic process"/>
    <property type="evidence" value="ECO:0007669"/>
    <property type="project" value="UniProtKB-UniRule"/>
</dbReference>
<dbReference type="CDD" id="cd04489">
    <property type="entry name" value="ExoVII_LU_OBF"/>
    <property type="match status" value="1"/>
</dbReference>
<dbReference type="HAMAP" id="MF_00378">
    <property type="entry name" value="Exonuc_7_L"/>
    <property type="match status" value="1"/>
</dbReference>
<dbReference type="InterPro" id="IPR003753">
    <property type="entry name" value="Exonuc_VII_L"/>
</dbReference>
<dbReference type="InterPro" id="IPR020579">
    <property type="entry name" value="Exonuc_VII_lsu_C"/>
</dbReference>
<dbReference type="InterPro" id="IPR025824">
    <property type="entry name" value="OB-fold_nuc-bd_dom"/>
</dbReference>
<dbReference type="NCBIfam" id="TIGR00237">
    <property type="entry name" value="xseA"/>
    <property type="match status" value="1"/>
</dbReference>
<dbReference type="PANTHER" id="PTHR30008">
    <property type="entry name" value="EXODEOXYRIBONUCLEASE 7 LARGE SUBUNIT"/>
    <property type="match status" value="1"/>
</dbReference>
<dbReference type="PANTHER" id="PTHR30008:SF0">
    <property type="entry name" value="EXODEOXYRIBONUCLEASE 7 LARGE SUBUNIT"/>
    <property type="match status" value="1"/>
</dbReference>
<dbReference type="Pfam" id="PF02601">
    <property type="entry name" value="Exonuc_VII_L"/>
    <property type="match status" value="1"/>
</dbReference>
<dbReference type="Pfam" id="PF13742">
    <property type="entry name" value="tRNA_anti_2"/>
    <property type="match status" value="1"/>
</dbReference>
<accession>Q578P4</accession>
<reference key="1">
    <citation type="journal article" date="2005" name="J. Bacteriol.">
        <title>Completion of the genome sequence of Brucella abortus and comparison to the highly similar genomes of Brucella melitensis and Brucella suis.</title>
        <authorList>
            <person name="Halling S.M."/>
            <person name="Peterson-Burch B.D."/>
            <person name="Bricker B.J."/>
            <person name="Zuerner R.L."/>
            <person name="Qing Z."/>
            <person name="Li L.-L."/>
            <person name="Kapur V."/>
            <person name="Alt D.P."/>
            <person name="Olsen S.C."/>
        </authorList>
    </citation>
    <scope>NUCLEOTIDE SEQUENCE [LARGE SCALE GENOMIC DNA]</scope>
    <source>
        <strain>9-941</strain>
    </source>
</reference>
<feature type="chain" id="PRO_0000273648" description="Exodeoxyribonuclease 7 large subunit">
    <location>
        <begin position="1"/>
        <end position="511"/>
    </location>
</feature>
<keyword id="KW-0963">Cytoplasm</keyword>
<keyword id="KW-0269">Exonuclease</keyword>
<keyword id="KW-0378">Hydrolase</keyword>
<keyword id="KW-0540">Nuclease</keyword>
<evidence type="ECO:0000255" key="1">
    <source>
        <dbReference type="HAMAP-Rule" id="MF_00378"/>
    </source>
</evidence>
<proteinExistence type="inferred from homology"/>